<proteinExistence type="inferred from homology"/>
<gene>
    <name type="primary">flk</name>
    <name type="synonym">div</name>
    <name type="ordered locus">b2321</name>
    <name type="ordered locus">JW2318</name>
</gene>
<accession>P15286</accession>
<accession>P77706</accession>
<accession>Q9JN62</accession>
<comment type="function">
    <text evidence="1">Acts as a regulator of flagellar gene expression by modulating the protein level of the anti sigma factor FlgM upon sensing ring completion or hook elongation. Flk could inhibit FlgM secretion by acting as a braking system for the flagellar-associated type III secretion (T3S) system. Plays a role in hindering to flip the flagellar T3S specificity switch from the rod and hook-type substrates to filament-type substrates prior to hook-basal body (HBB) completion possibly by preventing interaction of FliK with FlhB (By similarity).</text>
</comment>
<comment type="subcellular location">
    <subcellularLocation>
        <location evidence="4">Cell inner membrane</location>
        <topology evidence="4">Single-pass membrane protein</topology>
    </subcellularLocation>
</comment>
<comment type="similarity">
    <text evidence="4">Belongs to the flk family.</text>
</comment>
<feature type="chain" id="PRO_0000079923" description="Flagellar regulator flk">
    <location>
        <begin position="1"/>
        <end position="331"/>
    </location>
</feature>
<feature type="topological domain" description="Cytoplasmic" evidence="2">
    <location>
        <begin position="1"/>
        <end position="309"/>
    </location>
</feature>
<feature type="transmembrane region" description="Helical" evidence="2">
    <location>
        <begin position="310"/>
        <end position="330"/>
    </location>
</feature>
<feature type="topological domain" description="Periplasmic" evidence="2">
    <location>
        <position position="331"/>
    </location>
</feature>
<feature type="region of interest" description="Disordered" evidence="3">
    <location>
        <begin position="1"/>
        <end position="35"/>
    </location>
</feature>
<feature type="compositionally biased region" description="Pro residues" evidence="3">
    <location>
        <begin position="1"/>
        <end position="13"/>
    </location>
</feature>
<feature type="compositionally biased region" description="Polar residues" evidence="3">
    <location>
        <begin position="19"/>
        <end position="35"/>
    </location>
</feature>
<feature type="sequence conflict" description="In Ref. 4; AAA24307." evidence="4" ref="4">
    <location>
        <position position="2"/>
    </location>
</feature>
<name>FLK_ECOLI</name>
<evidence type="ECO:0000250" key="1"/>
<evidence type="ECO:0000255" key="2"/>
<evidence type="ECO:0000256" key="3">
    <source>
        <dbReference type="SAM" id="MobiDB-lite"/>
    </source>
</evidence>
<evidence type="ECO:0000305" key="4"/>
<sequence>MIQPISGPPPGQPPGQGDNLPSGTGNQPLSSQQRTSLESLMTKVTSLTQQQRAELWAGIRHDIGLSGDSPLLSRHFPAAEHNLAQRLLAAQKSHSARQLLAQLGEYLRLGNNRQAVTDYIRHNFGQTPLNQLSPEQLKTILTLLQEGKMVIPQPQQREATDRPLLPAEHNALKQLVTKLAAATGEPSKQIWQSMLELSGVKDGELIPAKLFNHLVTWLQARQTLSQQNTPTLESLQMTLKQPLDASELAALSAYIQQKYGLSAQSSLSSAQAEDILNQLYQRRVKGIDPRVMQPLLNPFPPMMDTLQNMATRPALWILLVAIILMLVWLVR</sequence>
<dbReference type="EMBL" id="U00096">
    <property type="protein sequence ID" value="AAC75381.1"/>
    <property type="molecule type" value="Genomic_DNA"/>
</dbReference>
<dbReference type="EMBL" id="AP009048">
    <property type="protein sequence ID" value="BAA16178.1"/>
    <property type="molecule type" value="Genomic_DNA"/>
</dbReference>
<dbReference type="EMBL" id="U76961">
    <property type="protein sequence ID" value="AAB36529.1"/>
    <property type="molecule type" value="Genomic_DNA"/>
</dbReference>
<dbReference type="EMBL" id="M29962">
    <property type="protein sequence ID" value="AAA24307.2"/>
    <property type="molecule type" value="Genomic_DNA"/>
</dbReference>
<dbReference type="PIR" id="G65004">
    <property type="entry name" value="G65004"/>
</dbReference>
<dbReference type="RefSeq" id="NP_416824.1">
    <property type="nucleotide sequence ID" value="NC_000913.3"/>
</dbReference>
<dbReference type="RefSeq" id="WP_000615834.1">
    <property type="nucleotide sequence ID" value="NZ_LN832404.1"/>
</dbReference>
<dbReference type="SMR" id="P15286"/>
<dbReference type="BioGRID" id="4263217">
    <property type="interactions" value="47"/>
</dbReference>
<dbReference type="DIP" id="DIP-9448N"/>
<dbReference type="FunCoup" id="P15286">
    <property type="interactions" value="34"/>
</dbReference>
<dbReference type="IntAct" id="P15286">
    <property type="interactions" value="4"/>
</dbReference>
<dbReference type="STRING" id="511145.b2321"/>
<dbReference type="jPOST" id="P15286"/>
<dbReference type="PaxDb" id="511145-b2321"/>
<dbReference type="EnsemblBacteria" id="AAC75381">
    <property type="protein sequence ID" value="AAC75381"/>
    <property type="gene ID" value="b2321"/>
</dbReference>
<dbReference type="GeneID" id="946776"/>
<dbReference type="KEGG" id="ecj:JW2318"/>
<dbReference type="KEGG" id="eco:b2321"/>
<dbReference type="KEGG" id="ecoc:C3026_12935"/>
<dbReference type="PATRIC" id="fig|1411691.4.peg.4412"/>
<dbReference type="EchoBASE" id="EB0225"/>
<dbReference type="eggNOG" id="ENOG502Z805">
    <property type="taxonomic scope" value="Bacteria"/>
</dbReference>
<dbReference type="HOGENOM" id="CLU_063700_0_0_6"/>
<dbReference type="InParanoid" id="P15286"/>
<dbReference type="OMA" id="FTHLVTW"/>
<dbReference type="OrthoDB" id="6497287at2"/>
<dbReference type="PhylomeDB" id="P15286"/>
<dbReference type="BioCyc" id="EcoCyc:EG10229-MONOMER"/>
<dbReference type="PRO" id="PR:P15286"/>
<dbReference type="Proteomes" id="UP000000625">
    <property type="component" value="Chromosome"/>
</dbReference>
<dbReference type="GO" id="GO:0005886">
    <property type="term" value="C:plasma membrane"/>
    <property type="evidence" value="ECO:0000314"/>
    <property type="project" value="EcoCyc"/>
</dbReference>
<dbReference type="GO" id="GO:0010468">
    <property type="term" value="P:regulation of gene expression"/>
    <property type="evidence" value="ECO:0007669"/>
    <property type="project" value="InterPro"/>
</dbReference>
<dbReference type="InterPro" id="IPR023597">
    <property type="entry name" value="Flagellar_regulator_Flk"/>
</dbReference>
<dbReference type="NCBIfam" id="NF007987">
    <property type="entry name" value="PRK10715.1"/>
    <property type="match status" value="1"/>
</dbReference>
<dbReference type="PIRSF" id="PIRSF020588">
    <property type="entry name" value="Flk"/>
    <property type="match status" value="1"/>
</dbReference>
<keyword id="KW-0997">Cell inner membrane</keyword>
<keyword id="KW-1003">Cell membrane</keyword>
<keyword id="KW-0472">Membrane</keyword>
<keyword id="KW-1185">Reference proteome</keyword>
<keyword id="KW-0812">Transmembrane</keyword>
<keyword id="KW-1133">Transmembrane helix</keyword>
<protein>
    <recommendedName>
        <fullName>Flagellar regulator flk</fullName>
    </recommendedName>
    <alternativeName>
        <fullName>Fluke</fullName>
    </alternativeName>
</protein>
<reference key="1">
    <citation type="journal article" date="1997" name="DNA Res.">
        <title>Construction of a contiguous 874-kb sequence of the Escherichia coli-K12 genome corresponding to 50.0-68.8 min on the linkage map and analysis of its sequence features.</title>
        <authorList>
            <person name="Yamamoto Y."/>
            <person name="Aiba H."/>
            <person name="Baba T."/>
            <person name="Hayashi K."/>
            <person name="Inada T."/>
            <person name="Isono K."/>
            <person name="Itoh T."/>
            <person name="Kimura S."/>
            <person name="Kitagawa M."/>
            <person name="Makino K."/>
            <person name="Miki T."/>
            <person name="Mitsuhashi N."/>
            <person name="Mizobuchi K."/>
            <person name="Mori H."/>
            <person name="Nakade S."/>
            <person name="Nakamura Y."/>
            <person name="Nashimoto H."/>
            <person name="Oshima T."/>
            <person name="Oyama S."/>
            <person name="Saito N."/>
            <person name="Sampei G."/>
            <person name="Satoh Y."/>
            <person name="Sivasundaram S."/>
            <person name="Tagami H."/>
            <person name="Takahashi H."/>
            <person name="Takeda J."/>
            <person name="Takemoto K."/>
            <person name="Uehara K."/>
            <person name="Wada C."/>
            <person name="Yamagata S."/>
            <person name="Horiuchi T."/>
        </authorList>
    </citation>
    <scope>NUCLEOTIDE SEQUENCE [LARGE SCALE GENOMIC DNA]</scope>
    <source>
        <strain>K12 / W3110 / ATCC 27325 / DSM 5911</strain>
    </source>
</reference>
<reference key="2">
    <citation type="journal article" date="1997" name="Science">
        <title>The complete genome sequence of Escherichia coli K-12.</title>
        <authorList>
            <person name="Blattner F.R."/>
            <person name="Plunkett G. III"/>
            <person name="Bloch C.A."/>
            <person name="Perna N.T."/>
            <person name="Burland V."/>
            <person name="Riley M."/>
            <person name="Collado-Vides J."/>
            <person name="Glasner J.D."/>
            <person name="Rode C.K."/>
            <person name="Mayhew G.F."/>
            <person name="Gregor J."/>
            <person name="Davis N.W."/>
            <person name="Kirkpatrick H.A."/>
            <person name="Goeden M.A."/>
            <person name="Rose D.J."/>
            <person name="Mau B."/>
            <person name="Shao Y."/>
        </authorList>
    </citation>
    <scope>NUCLEOTIDE SEQUENCE [LARGE SCALE GENOMIC DNA]</scope>
    <source>
        <strain>K12 / MG1655 / ATCC 47076</strain>
    </source>
</reference>
<reference key="3">
    <citation type="journal article" date="2006" name="Mol. Syst. Biol.">
        <title>Highly accurate genome sequences of Escherichia coli K-12 strains MG1655 and W3110.</title>
        <authorList>
            <person name="Hayashi K."/>
            <person name="Morooka N."/>
            <person name="Yamamoto Y."/>
            <person name="Fujita K."/>
            <person name="Isono K."/>
            <person name="Choi S."/>
            <person name="Ohtsubo E."/>
            <person name="Baba T."/>
            <person name="Wanner B.L."/>
            <person name="Mori H."/>
            <person name="Horiuchi T."/>
        </authorList>
    </citation>
    <scope>NUCLEOTIDE SEQUENCE [LARGE SCALE GENOMIC DNA]</scope>
    <source>
        <strain>K12 / W3110 / ATCC 27325 / DSM 5911</strain>
    </source>
</reference>
<reference key="4">
    <citation type="journal article" date="1989" name="J. Bacteriol.">
        <title>Divergent transcription of pdxB and homology between the pdxB and serA gene products in Escherichia coli K-12.</title>
        <authorList>
            <person name="Schoenlein P.V."/>
            <person name="Roa B.B."/>
            <person name="Winkler M.E."/>
        </authorList>
    </citation>
    <scope>NUCLEOTIDE SEQUENCE [GENOMIC DNA] OF 1-39</scope>
    <source>
        <strain>K12 / W3110 / ATCC 27325 / DSM 5911</strain>
    </source>
</reference>
<organism>
    <name type="scientific">Escherichia coli (strain K12)</name>
    <dbReference type="NCBI Taxonomy" id="83333"/>
    <lineage>
        <taxon>Bacteria</taxon>
        <taxon>Pseudomonadati</taxon>
        <taxon>Pseudomonadota</taxon>
        <taxon>Gammaproteobacteria</taxon>
        <taxon>Enterobacterales</taxon>
        <taxon>Enterobacteriaceae</taxon>
        <taxon>Escherichia</taxon>
    </lineage>
</organism>